<reference key="1">
    <citation type="journal article" date="2005" name="Genome Res.">
        <title>Comparative genome sequencing of Drosophila pseudoobscura: chromosomal, gene, and cis-element evolution.</title>
        <authorList>
            <person name="Richards S."/>
            <person name="Liu Y."/>
            <person name="Bettencourt B.R."/>
            <person name="Hradecky P."/>
            <person name="Letovsky S."/>
            <person name="Nielsen R."/>
            <person name="Thornton K."/>
            <person name="Hubisz M.J."/>
            <person name="Chen R."/>
            <person name="Meisel R.P."/>
            <person name="Couronne O."/>
            <person name="Hua S."/>
            <person name="Smith M.A."/>
            <person name="Zhang P."/>
            <person name="Liu J."/>
            <person name="Bussemaker H.J."/>
            <person name="van Batenburg M.F."/>
            <person name="Howells S.L."/>
            <person name="Scherer S.E."/>
            <person name="Sodergren E."/>
            <person name="Matthews B.B."/>
            <person name="Crosby M.A."/>
            <person name="Schroeder A.J."/>
            <person name="Ortiz-Barrientos D."/>
            <person name="Rives C.M."/>
            <person name="Metzker M.L."/>
            <person name="Muzny D.M."/>
            <person name="Scott G."/>
            <person name="Steffen D."/>
            <person name="Wheeler D.A."/>
            <person name="Worley K.C."/>
            <person name="Havlak P."/>
            <person name="Durbin K.J."/>
            <person name="Egan A."/>
            <person name="Gill R."/>
            <person name="Hume J."/>
            <person name="Morgan M.B."/>
            <person name="Miner G."/>
            <person name="Hamilton C."/>
            <person name="Huang Y."/>
            <person name="Waldron L."/>
            <person name="Verduzco D."/>
            <person name="Clerc-Blankenburg K.P."/>
            <person name="Dubchak I."/>
            <person name="Noor M.A.F."/>
            <person name="Anderson W."/>
            <person name="White K.P."/>
            <person name="Clark A.G."/>
            <person name="Schaeffer S.W."/>
            <person name="Gelbart W.M."/>
            <person name="Weinstock G.M."/>
            <person name="Gibbs R.A."/>
        </authorList>
    </citation>
    <scope>NUCLEOTIDE SEQUENCE [LARGE SCALE GENOMIC DNA]</scope>
    <source>
        <strain>MV2-25 / Tucson 14011-0121.94</strain>
    </source>
</reference>
<accession>Q29M42</accession>
<organism>
    <name type="scientific">Drosophila pseudoobscura pseudoobscura</name>
    <name type="common">Fruit fly</name>
    <dbReference type="NCBI Taxonomy" id="46245"/>
    <lineage>
        <taxon>Eukaryota</taxon>
        <taxon>Metazoa</taxon>
        <taxon>Ecdysozoa</taxon>
        <taxon>Arthropoda</taxon>
        <taxon>Hexapoda</taxon>
        <taxon>Insecta</taxon>
        <taxon>Pterygota</taxon>
        <taxon>Neoptera</taxon>
        <taxon>Endopterygota</taxon>
        <taxon>Diptera</taxon>
        <taxon>Brachycera</taxon>
        <taxon>Muscomorpha</taxon>
        <taxon>Ephydroidea</taxon>
        <taxon>Drosophilidae</taxon>
        <taxon>Drosophila</taxon>
        <taxon>Sophophora</taxon>
    </lineage>
</organism>
<name>C2D1_DROPS</name>
<comment type="function">
    <text evidence="1">Phosphatidyl inositol monophosphate binding protein involved in endosomal protein sorting through regulation of the endosomal sorting required for transport (ESCRT) pathway. Required for full activity of the ESCRT-III complex core component shrb/shrub, probably by preventing its inappropriate polymerisation. Required, but not essential, for the efficient generation of intraluminal vesicles (ILVs) in multivesicular bodies (MVBs). Involved in a late stage of the endosomal pathway targeting transmembrane proteins of the plasma membrane for lysosomal degradation. Plays a critical role in regulation of multiple signal transduction pathways, including the Notch and BMP/decapentaplegic (dpp) signaling pathways, through targeting of membrane bound receptors to multivesicular bodies, isolating them from the cytoplasm and targeting them for lysosomal degradation. Involved in targeting N/Notch for endosomal degradation, negatively regulating the Notch signaling pathway. Regulates Notch signaling in imaginal disk cells and follicle cells during oogenesis and multiple developmental processes, including development of wings, veins, legs, eyes and bristles. Restricts the activity of Notch to the dorsoventral (D/V) boundary of the wing imaginal disk. In external sensory organ development regulates Notch signaling during asymmetric cell division and differentiation of sensory organ precursor cells. May be involved in regulation of apoptosis and cell growth independent of Notch signaling. Involved in targeting tkv for endosomal degradation, negatively regulating the BMP/decapentaplegic (dpp) signaling pathway. Regulates the BMP/dpp signaling pathway in follicle cells during oogenesis, but not in imaginal disk cells during wing development. May be involved in differentiation or morphogenesis of peripodial epithelial cells in the developing imaginal disk. Involved in abscission of germline cells during oogenesis.</text>
</comment>
<comment type="subunit">
    <text evidence="1">Interacts (via DM14 domains 1 and 3) with shrb; the interaction is direct and blocks access to the surface involved in shrb polymerization. This interaction may be required for the ESCRT-III complex role in multivesicular body formation.</text>
</comment>
<comment type="subcellular location">
    <subcellularLocation>
        <location evidence="1">Cytoplasm</location>
    </subcellularLocation>
    <subcellularLocation>
        <location evidence="1">Cytoplasm</location>
        <location evidence="1">Cytosol</location>
    </subcellularLocation>
    <subcellularLocation>
        <location evidence="1">Apicolateral cell membrane</location>
        <topology evidence="1">Peripheral membrane protein</topology>
        <orientation evidence="1">Cytoplasmic side</orientation>
    </subcellularLocation>
    <subcellularLocation>
        <location evidence="1">Cytoplasm</location>
        <location evidence="1">Cell cortex</location>
    </subcellularLocation>
    <subcellularLocation>
        <location evidence="1">Endosome</location>
    </subcellularLocation>
    <text evidence="1">Punctate localization in the cell cortex could indicate vesicle association. Apico-lateral membrane concentration in polarized epithelial and imaginal disk cells but not in asymmetrically dividing neuroblasts.</text>
</comment>
<comment type="domain">
    <text evidence="1">The C2 domain mediates interaction with monophosphorylated phosphatidylinositols PtdIns[3]P, PtdIns[4]P and PtdIns[5]P, and is required for membrane interaction. C2 domains can mediate membrane interactions in a Ca(2+)-dependent or -independent manner; the l(2)gd1 C2 domain lacks three out of five asparagines that are crucial for Ca(2+) binding. The C2 domain is required for protein stability and cytoplasmic localization, and is essential for l(2)gd1 function.</text>
</comment>
<comment type="domain">
    <text evidence="1">Contains 4 tandem repeats of the DM14 domain that mediate interaction with the ESCRT-III complex component shrb. The 4 DM14 domains show functional redundancy, particularly domains 1 and 3, however domain 3 is necessary and sufficient for l(2)gd1 function. DM14 domain 3 forms an alpha-helical hairpin loop with a positively charged surface patch that binds a negatively charged surface patch on shrb.</text>
</comment>
<comment type="similarity">
    <text evidence="5">Belongs to the CC2D1 family.</text>
</comment>
<protein>
    <recommendedName>
        <fullName evidence="5">Coiled-coil and C2 domain-containing protein 1-like</fullName>
    </recommendedName>
    <alternativeName>
        <fullName evidence="5">Lethal (2) giant discs 1 protein</fullName>
    </alternativeName>
</protein>
<sequence>MFAKRKPEPAKRRQHNLAQFGLTEIPDDFDPTSGYGDDDGGDSDLEAELAALASGGGQRPKAKPKPKLMPTSDLDKMIADSLRDVSDDDDDENLENDSDLLGELHGIGGLEEEPEAEEAAAEPAASEEEPVQTFLPTTTVDTLGIIKQRLEIYKQAEANAKASGDSGKARRFGRGLKTLQDLHKQAAAGKTINVDDIPPEVSVKPAGDPSPAADESPAPSTPVSQPTRVAPAPPTPTSPPAATPPPAPATPPNPLVAQMRSRQSEYKAAALQYKRSGDTANALQFLKVVKQFDVVVKMCEDGQEVDLSDMPPPPSEFLEFLAKMKGEAAPEVVTAPEPTPAPAPATPPAAAAAAESMLEALQRRLEKYKSVEAAAKAEENTGKARRFGRIVKQYEDAIKQYKAGKPVAYDELPVPPGFGPLPSTEPAPAATPSLPTSPTSPPATASTSAGGTPSGSSATTPTVPRKAAPSPPQPTELTTRVTGNHQKSNLAEQQMKLLLERQKEFKVAAIEAKKAGEIDQAKEYLKIYKGFDSLLNAASSGLPVDLSTLPVPPSQRDNLEASFAIVSAEECDPSDDICEIGVRMEEQLAKQLMMCKNTRDHHKAMGDVAGMNRFENLALTVQKDLDVVRYSKRKGQPLPKFHYEKRNFNIVHCNTDLTDNELEIVVARGINYNVPNPKEVDTYVRVEFPLLNDESFKTKTNVIKDTNSPDYDERFKVDIQRSNRQFQRIFKRHGVKLEIYSRGGFLRSDILIGTVNVKLQPLETKCDIHDTYDLMDGRKQVGGKLEVKVRVRNPILTKQIEHINEKWLVLDAEG</sequence>
<gene>
    <name type="ORF">GA18377</name>
</gene>
<dbReference type="EMBL" id="CH379060">
    <property type="protein sequence ID" value="EAL33853.2"/>
    <property type="molecule type" value="Genomic_DNA"/>
</dbReference>
<dbReference type="RefSeq" id="XP_001356787.2">
    <property type="nucleotide sequence ID" value="XM_001356751.3"/>
</dbReference>
<dbReference type="SMR" id="Q29M42"/>
<dbReference type="FunCoup" id="Q29M42">
    <property type="interactions" value="1285"/>
</dbReference>
<dbReference type="STRING" id="46245.Q29M42"/>
<dbReference type="EnsemblMetazoa" id="FBtr0282232">
    <property type="protein sequence ID" value="FBpp0280670"/>
    <property type="gene ID" value="FBgn0078380"/>
</dbReference>
<dbReference type="KEGG" id="dpo:4817348"/>
<dbReference type="eggNOG" id="KOG3837">
    <property type="taxonomic scope" value="Eukaryota"/>
</dbReference>
<dbReference type="HOGENOM" id="CLU_008808_1_0_1"/>
<dbReference type="InParanoid" id="Q29M42"/>
<dbReference type="OMA" id="IMCRNTR"/>
<dbReference type="Proteomes" id="UP000001819">
    <property type="component" value="Chromosome 4"/>
</dbReference>
<dbReference type="Bgee" id="FBgn0078380">
    <property type="expression patterns" value="Expressed in female reproductive system and 2 other cell types or tissues"/>
</dbReference>
<dbReference type="ExpressionAtlas" id="Q29M42">
    <property type="expression patterns" value="baseline"/>
</dbReference>
<dbReference type="GO" id="GO:0016327">
    <property type="term" value="C:apicolateral plasma membrane"/>
    <property type="evidence" value="ECO:0007669"/>
    <property type="project" value="UniProtKB-SubCell"/>
</dbReference>
<dbReference type="GO" id="GO:0005938">
    <property type="term" value="C:cell cortex"/>
    <property type="evidence" value="ECO:0007669"/>
    <property type="project" value="UniProtKB-SubCell"/>
</dbReference>
<dbReference type="GO" id="GO:0005829">
    <property type="term" value="C:cytosol"/>
    <property type="evidence" value="ECO:0007669"/>
    <property type="project" value="UniProtKB-SubCell"/>
</dbReference>
<dbReference type="GO" id="GO:0005768">
    <property type="term" value="C:endosome"/>
    <property type="evidence" value="ECO:0007669"/>
    <property type="project" value="UniProtKB-SubCell"/>
</dbReference>
<dbReference type="GO" id="GO:0001227">
    <property type="term" value="F:DNA-binding transcription repressor activity, RNA polymerase II-specific"/>
    <property type="evidence" value="ECO:0007669"/>
    <property type="project" value="InterPro"/>
</dbReference>
<dbReference type="CDD" id="cd08690">
    <property type="entry name" value="C2_Freud-1"/>
    <property type="match status" value="1"/>
</dbReference>
<dbReference type="FunFam" id="2.60.40.150:FF:000255">
    <property type="entry name" value="Uncharacterized protein, isoform A"/>
    <property type="match status" value="1"/>
</dbReference>
<dbReference type="Gene3D" id="2.60.40.150">
    <property type="entry name" value="C2 domain"/>
    <property type="match status" value="1"/>
</dbReference>
<dbReference type="InterPro" id="IPR000008">
    <property type="entry name" value="C2_dom"/>
</dbReference>
<dbReference type="InterPro" id="IPR035892">
    <property type="entry name" value="C2_domain_sf"/>
</dbReference>
<dbReference type="InterPro" id="IPR037772">
    <property type="entry name" value="C2_Freud"/>
</dbReference>
<dbReference type="InterPro" id="IPR039725">
    <property type="entry name" value="CC2D1A/B"/>
</dbReference>
<dbReference type="InterPro" id="IPR006608">
    <property type="entry name" value="CC2D1A/B_DM14"/>
</dbReference>
<dbReference type="PANTHER" id="PTHR13076">
    <property type="entry name" value="COILED-COIL AND C2 DOMAIN-CONTAINING PROTEIN 1-LIKE"/>
    <property type="match status" value="1"/>
</dbReference>
<dbReference type="PANTHER" id="PTHR13076:SF9">
    <property type="entry name" value="COILED-COIL AND C2 DOMAIN-CONTAINING PROTEIN 1-LIKE"/>
    <property type="match status" value="1"/>
</dbReference>
<dbReference type="Pfam" id="PF00168">
    <property type="entry name" value="C2"/>
    <property type="match status" value="1"/>
</dbReference>
<dbReference type="Pfam" id="PF21528">
    <property type="entry name" value="CC2D1A-B_DM14"/>
    <property type="match status" value="3"/>
</dbReference>
<dbReference type="SMART" id="SM00239">
    <property type="entry name" value="C2"/>
    <property type="match status" value="1"/>
</dbReference>
<dbReference type="SMART" id="SM00685">
    <property type="entry name" value="DM14"/>
    <property type="match status" value="4"/>
</dbReference>
<dbReference type="SUPFAM" id="SSF49562">
    <property type="entry name" value="C2 domain (Calcium/lipid-binding domain, CaLB)"/>
    <property type="match status" value="1"/>
</dbReference>
<dbReference type="PROSITE" id="PS50004">
    <property type="entry name" value="C2"/>
    <property type="match status" value="1"/>
</dbReference>
<evidence type="ECO:0000250" key="1">
    <source>
        <dbReference type="UniProtKB" id="Q9VKJ9"/>
    </source>
</evidence>
<evidence type="ECO:0000255" key="2"/>
<evidence type="ECO:0000255" key="3">
    <source>
        <dbReference type="PROSITE-ProRule" id="PRU00041"/>
    </source>
</evidence>
<evidence type="ECO:0000256" key="4">
    <source>
        <dbReference type="SAM" id="MobiDB-lite"/>
    </source>
</evidence>
<evidence type="ECO:0000305" key="5"/>
<proteinExistence type="inferred from homology"/>
<feature type="chain" id="PRO_0000288431" description="Coiled-coil and C2 domain-containing protein 1-like">
    <location>
        <begin position="1"/>
        <end position="814"/>
    </location>
</feature>
<feature type="domain" description="C2" evidence="3">
    <location>
        <begin position="633"/>
        <end position="772"/>
    </location>
</feature>
<feature type="region of interest" description="Disordered" evidence="4">
    <location>
        <begin position="1"/>
        <end position="136"/>
    </location>
</feature>
<feature type="region of interest" description="DM14 1" evidence="5">
    <location>
        <begin position="143"/>
        <end position="201"/>
    </location>
</feature>
<feature type="region of interest" description="Disordered" evidence="4">
    <location>
        <begin position="157"/>
        <end position="263"/>
    </location>
</feature>
<feature type="region of interest" description="DM14 2" evidence="5">
    <location>
        <begin position="256"/>
        <end position="314"/>
    </location>
</feature>
<feature type="region of interest" description="DM14 3" evidence="5">
    <location>
        <begin position="358"/>
        <end position="416"/>
    </location>
</feature>
<feature type="region of interest" description="Disordered" evidence="4">
    <location>
        <begin position="414"/>
        <end position="486"/>
    </location>
</feature>
<feature type="region of interest" description="DM14 4" evidence="5">
    <location>
        <begin position="495"/>
        <end position="553"/>
    </location>
</feature>
<feature type="coiled-coil region" evidence="2">
    <location>
        <begin position="351"/>
        <end position="378"/>
    </location>
</feature>
<feature type="compositionally biased region" description="Basic and acidic residues" evidence="4">
    <location>
        <begin position="1"/>
        <end position="11"/>
    </location>
</feature>
<feature type="compositionally biased region" description="Acidic residues" evidence="4">
    <location>
        <begin position="25"/>
        <end position="47"/>
    </location>
</feature>
<feature type="compositionally biased region" description="Basic and acidic residues" evidence="4">
    <location>
        <begin position="73"/>
        <end position="85"/>
    </location>
</feature>
<feature type="compositionally biased region" description="Acidic residues" evidence="4">
    <location>
        <begin position="86"/>
        <end position="100"/>
    </location>
</feature>
<feature type="compositionally biased region" description="Acidic residues" evidence="4">
    <location>
        <begin position="110"/>
        <end position="130"/>
    </location>
</feature>
<feature type="compositionally biased region" description="Low complexity" evidence="4">
    <location>
        <begin position="205"/>
        <end position="230"/>
    </location>
</feature>
<feature type="compositionally biased region" description="Pro residues" evidence="4">
    <location>
        <begin position="231"/>
        <end position="254"/>
    </location>
</feature>
<feature type="compositionally biased region" description="Pro residues" evidence="4">
    <location>
        <begin position="414"/>
        <end position="425"/>
    </location>
</feature>
<feature type="compositionally biased region" description="Low complexity" evidence="4">
    <location>
        <begin position="426"/>
        <end position="462"/>
    </location>
</feature>
<feature type="compositionally biased region" description="Polar residues" evidence="4">
    <location>
        <begin position="475"/>
        <end position="486"/>
    </location>
</feature>
<keyword id="KW-1003">Cell membrane</keyword>
<keyword id="KW-0175">Coiled coil</keyword>
<keyword id="KW-0963">Cytoplasm</keyword>
<keyword id="KW-0967">Endosome</keyword>
<keyword id="KW-0472">Membrane</keyword>
<keyword id="KW-1185">Reference proteome</keyword>